<keyword id="KW-0560">Oxidoreductase</keyword>
<keyword id="KW-0670">Pyruvate</keyword>
<keyword id="KW-0786">Thiamine pyrophosphate</keyword>
<dbReference type="EC" id="1.2.4.1"/>
<dbReference type="EMBL" id="X12455">
    <property type="protein sequence ID" value="CAA30986.1"/>
    <property type="molecule type" value="Genomic_DNA"/>
</dbReference>
<dbReference type="PIR" id="S12208">
    <property type="entry name" value="S12208"/>
</dbReference>
<dbReference type="SMR" id="P10801"/>
<dbReference type="GO" id="GO:0004739">
    <property type="term" value="F:pyruvate dehydrogenase (acetyl-transferring) activity"/>
    <property type="evidence" value="ECO:0007669"/>
    <property type="project" value="UniProtKB-EC"/>
</dbReference>
<dbReference type="Gene3D" id="3.40.50.920">
    <property type="match status" value="1"/>
</dbReference>
<dbReference type="InterPro" id="IPR009014">
    <property type="entry name" value="Transketo_C/PFOR_II"/>
</dbReference>
<dbReference type="SUPFAM" id="SSF52922">
    <property type="entry name" value="TK C-terminal domain-like"/>
    <property type="match status" value="1"/>
</dbReference>
<accession>P10801</accession>
<sequence>EVDRYWVVLAALEALADRGDIEAKVVAEAIAKFGIDPDKRNPLDC</sequence>
<reference key="1">
    <citation type="journal article" date="1988" name="Eur. J. Biochem.">
        <title>The dihydrolipoyltransacetylase component of the pyruvate dehydrogenase complex from Azotobacter vinelandii. Molecular cloning and sequence analysis.</title>
        <authorList>
            <person name="Hanemaaijer R."/>
            <person name="Janssen A."/>
            <person name="de Kok A."/>
            <person name="Veeger C."/>
        </authorList>
    </citation>
    <scope>NUCLEOTIDE SEQUENCE [GENOMIC DNA]</scope>
    <source>
        <strain>ATCC 478 / DSM 2289 / BCRC 14361 / JCM 21475 / KCTC 12137 / NBRC 102612 / NCIMB 12096 / NRRL B-14641 / VKM B-1617 / NRS 16</strain>
    </source>
</reference>
<comment type="function">
    <text>The pyruvate dehydrogenase complex catalyzes the overall conversion of pyruvate to acetyl-CoA and CO(2). It contains multiple copies of three enzymatic components: pyruvate dehydrogenase (E1), dihydrolipoamide acetyltransferase (E2) and lipoamide dehydrogenase (E3).</text>
</comment>
<comment type="catalytic activity">
    <reaction>
        <text>N(6)-[(R)-lipoyl]-L-lysyl-[protein] + pyruvate + H(+) = N(6)-[(R)-S(8)-acetyldihydrolipoyl]-L-lysyl-[protein] + CO2</text>
        <dbReference type="Rhea" id="RHEA:19189"/>
        <dbReference type="Rhea" id="RHEA-COMP:10474"/>
        <dbReference type="Rhea" id="RHEA-COMP:10478"/>
        <dbReference type="ChEBI" id="CHEBI:15361"/>
        <dbReference type="ChEBI" id="CHEBI:15378"/>
        <dbReference type="ChEBI" id="CHEBI:16526"/>
        <dbReference type="ChEBI" id="CHEBI:83099"/>
        <dbReference type="ChEBI" id="CHEBI:83111"/>
        <dbReference type="EC" id="1.2.4.1"/>
    </reaction>
</comment>
<comment type="cofactor">
    <cofactor>
        <name>thiamine diphosphate</name>
        <dbReference type="ChEBI" id="CHEBI:58937"/>
    </cofactor>
</comment>
<comment type="subunit">
    <text>Homodimer.</text>
</comment>
<protein>
    <recommendedName>
        <fullName>Pyruvate dehydrogenase E1 component</fullName>
        <ecNumber>1.2.4.1</ecNumber>
    </recommendedName>
</protein>
<name>ODP1_AZOVI</name>
<proteinExistence type="predicted"/>
<feature type="chain" id="PRO_0000162239" description="Pyruvate dehydrogenase E1 component">
    <location>
        <begin position="1" status="less than"/>
        <end position="45"/>
    </location>
</feature>
<feature type="non-terminal residue">
    <location>
        <position position="1"/>
    </location>
</feature>
<organism>
    <name type="scientific">Azotobacter vinelandii</name>
    <dbReference type="NCBI Taxonomy" id="354"/>
    <lineage>
        <taxon>Bacteria</taxon>
        <taxon>Pseudomonadati</taxon>
        <taxon>Pseudomonadota</taxon>
        <taxon>Gammaproteobacteria</taxon>
        <taxon>Pseudomonadales</taxon>
        <taxon>Pseudomonadaceae</taxon>
        <taxon>Azotobacter</taxon>
    </lineage>
</organism>